<feature type="chain" id="PRO_0000169135" description="Uncharacterized protein YehP">
    <location>
        <begin position="1"/>
        <end position="378"/>
    </location>
</feature>
<name>YEHP_ECOLI</name>
<gene>
    <name type="primary">yehP</name>
    <name type="ordered locus">b2121</name>
    <name type="ordered locus">JW5350</name>
</gene>
<organism>
    <name type="scientific">Escherichia coli (strain K12)</name>
    <dbReference type="NCBI Taxonomy" id="83333"/>
    <lineage>
        <taxon>Bacteria</taxon>
        <taxon>Pseudomonadati</taxon>
        <taxon>Pseudomonadota</taxon>
        <taxon>Gammaproteobacteria</taxon>
        <taxon>Enterobacterales</taxon>
        <taxon>Enterobacteriaceae</taxon>
        <taxon>Escherichia</taxon>
    </lineage>
</organism>
<protein>
    <recommendedName>
        <fullName>Uncharacterized protein YehP</fullName>
    </recommendedName>
</protein>
<reference key="1">
    <citation type="submission" date="1993-10" db="EMBL/GenBank/DDBJ databases">
        <title>Automated multiplex sequencing of the E.coli genome.</title>
        <authorList>
            <person name="Richterich P."/>
            <person name="Lakey N."/>
            <person name="Gryan G."/>
            <person name="Jaehn L."/>
            <person name="Mintz L."/>
            <person name="Robison K."/>
            <person name="Church G.M."/>
        </authorList>
    </citation>
    <scope>NUCLEOTIDE SEQUENCE [LARGE SCALE GENOMIC DNA]</scope>
    <source>
        <strain>K12 / BHB2600</strain>
    </source>
</reference>
<reference key="2">
    <citation type="journal article" date="1997" name="Science">
        <title>The complete genome sequence of Escherichia coli K-12.</title>
        <authorList>
            <person name="Blattner F.R."/>
            <person name="Plunkett G. III"/>
            <person name="Bloch C.A."/>
            <person name="Perna N.T."/>
            <person name="Burland V."/>
            <person name="Riley M."/>
            <person name="Collado-Vides J."/>
            <person name="Glasner J.D."/>
            <person name="Rode C.K."/>
            <person name="Mayhew G.F."/>
            <person name="Gregor J."/>
            <person name="Davis N.W."/>
            <person name="Kirkpatrick H.A."/>
            <person name="Goeden M.A."/>
            <person name="Rose D.J."/>
            <person name="Mau B."/>
            <person name="Shao Y."/>
        </authorList>
    </citation>
    <scope>NUCLEOTIDE SEQUENCE [LARGE SCALE GENOMIC DNA]</scope>
    <source>
        <strain>K12 / MG1655 / ATCC 47076</strain>
    </source>
</reference>
<reference key="3">
    <citation type="journal article" date="2006" name="Mol. Syst. Biol.">
        <title>Highly accurate genome sequences of Escherichia coli K-12 strains MG1655 and W3110.</title>
        <authorList>
            <person name="Hayashi K."/>
            <person name="Morooka N."/>
            <person name="Yamamoto Y."/>
            <person name="Fujita K."/>
            <person name="Isono K."/>
            <person name="Choi S."/>
            <person name="Ohtsubo E."/>
            <person name="Baba T."/>
            <person name="Wanner B.L."/>
            <person name="Mori H."/>
            <person name="Horiuchi T."/>
        </authorList>
    </citation>
    <scope>NUCLEOTIDE SEQUENCE [LARGE SCALE GENOMIC DNA]</scope>
    <source>
        <strain>K12 / W3110 / ATCC 27325 / DSM 5911</strain>
    </source>
</reference>
<keyword id="KW-1185">Reference proteome</keyword>
<proteinExistence type="predicted"/>
<accession>P33352</accession>
<accession>Q2MAV9</accession>
<dbReference type="EMBL" id="U00007">
    <property type="protein sequence ID" value="AAA60484.1"/>
    <property type="molecule type" value="Genomic_DNA"/>
</dbReference>
<dbReference type="EMBL" id="U00096">
    <property type="protein sequence ID" value="AAC75182.1"/>
    <property type="molecule type" value="Genomic_DNA"/>
</dbReference>
<dbReference type="EMBL" id="AP009048">
    <property type="protein sequence ID" value="BAE76597.1"/>
    <property type="molecule type" value="Genomic_DNA"/>
</dbReference>
<dbReference type="PIR" id="H64979">
    <property type="entry name" value="H64979"/>
</dbReference>
<dbReference type="RefSeq" id="NP_416625.1">
    <property type="nucleotide sequence ID" value="NC_000913.3"/>
</dbReference>
<dbReference type="RefSeq" id="WP_001333512.1">
    <property type="nucleotide sequence ID" value="NZ_LN832404.1"/>
</dbReference>
<dbReference type="BioGRID" id="4260442">
    <property type="interactions" value="113"/>
</dbReference>
<dbReference type="FunCoup" id="P33352">
    <property type="interactions" value="239"/>
</dbReference>
<dbReference type="STRING" id="511145.b2121"/>
<dbReference type="PaxDb" id="511145-b2121"/>
<dbReference type="EnsemblBacteria" id="AAC75182">
    <property type="protein sequence ID" value="AAC75182"/>
    <property type="gene ID" value="b2121"/>
</dbReference>
<dbReference type="GeneID" id="946652"/>
<dbReference type="KEGG" id="ecj:JW5350"/>
<dbReference type="KEGG" id="eco:b2121"/>
<dbReference type="KEGG" id="ecoc:C3026_11895"/>
<dbReference type="PATRIC" id="fig|511145.12.peg.2199"/>
<dbReference type="EchoBASE" id="EB1940"/>
<dbReference type="eggNOG" id="COG3552">
    <property type="taxonomic scope" value="Bacteria"/>
</dbReference>
<dbReference type="HOGENOM" id="CLU_058765_0_0_6"/>
<dbReference type="InParanoid" id="P33352"/>
<dbReference type="OMA" id="PAYDREH"/>
<dbReference type="OrthoDB" id="9789979at2"/>
<dbReference type="PhylomeDB" id="P33352"/>
<dbReference type="BioCyc" id="EcoCyc:EG12002-MONOMER"/>
<dbReference type="PRO" id="PR:P33352"/>
<dbReference type="Proteomes" id="UP000000625">
    <property type="component" value="Chromosome"/>
</dbReference>
<dbReference type="GO" id="GO:0071978">
    <property type="term" value="P:bacterial-type flagellum-dependent swarming motility"/>
    <property type="evidence" value="ECO:0000315"/>
    <property type="project" value="EcoCyc"/>
</dbReference>
<dbReference type="CDD" id="cd01462">
    <property type="entry name" value="VWA_YIEM_type"/>
    <property type="match status" value="1"/>
</dbReference>
<dbReference type="Gene3D" id="3.40.50.410">
    <property type="entry name" value="von Willebrand factor, type A domain"/>
    <property type="match status" value="1"/>
</dbReference>
<dbReference type="InterPro" id="IPR050458">
    <property type="entry name" value="LolB"/>
</dbReference>
<dbReference type="InterPro" id="IPR008912">
    <property type="entry name" value="Uncharacterised_CoxE"/>
</dbReference>
<dbReference type="InterPro" id="IPR002035">
    <property type="entry name" value="VWF_A"/>
</dbReference>
<dbReference type="InterPro" id="IPR036465">
    <property type="entry name" value="vWFA_dom_sf"/>
</dbReference>
<dbReference type="PANTHER" id="PTHR30634">
    <property type="entry name" value="OUTER MEMBRANE LOLAB LIPOPROTEIN INSERTION APPARATUS"/>
    <property type="match status" value="1"/>
</dbReference>
<dbReference type="PANTHER" id="PTHR30634:SF16">
    <property type="entry name" value="OUTER-MEMBRANE LIPOPROTEIN LOLB"/>
    <property type="match status" value="1"/>
</dbReference>
<dbReference type="Pfam" id="PF05762">
    <property type="entry name" value="VWA_CoxE"/>
    <property type="match status" value="1"/>
</dbReference>
<dbReference type="SMART" id="SM00327">
    <property type="entry name" value="VWA"/>
    <property type="match status" value="1"/>
</dbReference>
<dbReference type="SUPFAM" id="SSF53300">
    <property type="entry name" value="vWA-like"/>
    <property type="match status" value="1"/>
</dbReference>
<sequence>MSELNDLLTTRELQRWRLILGEAAETTLCGLDDNARQIDHALEWLYGRDPERLQRGERSGGLGGSNLTTPEWINSIHTLFPQQVIERLESDAVLRYGIEDVVTNLDVLERMQPSESLLRAVLHTKHLMNPEVLAAARRIVCQVVEEIMARLAKEVRQAFSGVRDRRRRSFIPLARNFDFKSTLRANLQHWHPQHGKLYIESPRFNSRIKRQSEQWQLVLLVDQSGSMVDSVIHSAVMAACLWQLPGIRTHLVAFDTSVVDLTADVADPVELLMKVQLGGGTNIASAVEYGRQLIEQPAKSVIILVSDFYEGGSSSLLTHQVKKCVQSGIKVLGLAALDSTATPCYDRDTAQALVNVGAQIAAMTPGELASWLAENLQS</sequence>